<protein>
    <recommendedName>
        <fullName evidence="1">Kelch-like protein diablo</fullName>
    </recommendedName>
</protein>
<proteinExistence type="inferred from homology"/>
<comment type="function">
    <text evidence="1 2">Probable substrate-specific adapter of an E3 ubiquitin-protein ligase complex which mediates the ubiquitination and subsequent proteasomal degradation of target proteins. May have a role in synapse differentiation and growth (By similarity).</text>
</comment>
<comment type="pathway">
    <text evidence="2">Protein modification; protein ubiquitination.</text>
</comment>
<keyword id="KW-0009">Actin-binding</keyword>
<keyword id="KW-0880">Kelch repeat</keyword>
<keyword id="KW-1185">Reference proteome</keyword>
<keyword id="KW-0677">Repeat</keyword>
<keyword id="KW-0833">Ubl conjugation pathway</keyword>
<evidence type="ECO:0000250" key="1">
    <source>
        <dbReference type="UniProtKB" id="Q9VUU5"/>
    </source>
</evidence>
<evidence type="ECO:0000250" key="2">
    <source>
        <dbReference type="UniProtKB" id="Q9Y2M5"/>
    </source>
</evidence>
<evidence type="ECO:0000255" key="3"/>
<evidence type="ECO:0000255" key="4">
    <source>
        <dbReference type="PROSITE-ProRule" id="PRU00037"/>
    </source>
</evidence>
<evidence type="ECO:0000256" key="5">
    <source>
        <dbReference type="SAM" id="MobiDB-lite"/>
    </source>
</evidence>
<evidence type="ECO:0000312" key="6">
    <source>
        <dbReference type="EMBL" id="EAL30933.2"/>
    </source>
</evidence>
<feature type="chain" id="PRO_0000379951" description="Kelch-like protein diablo">
    <location>
        <begin position="1"/>
        <end position="628"/>
    </location>
</feature>
<feature type="domain" description="BTB" evidence="4">
    <location>
        <begin position="74"/>
        <end position="141"/>
    </location>
</feature>
<feature type="domain" description="BACK" evidence="3">
    <location>
        <begin position="176"/>
        <end position="278"/>
    </location>
</feature>
<feature type="repeat" description="Kelch 1" evidence="3">
    <location>
        <begin position="325"/>
        <end position="371"/>
    </location>
</feature>
<feature type="repeat" description="Kelch 2" evidence="3">
    <location>
        <begin position="373"/>
        <end position="419"/>
    </location>
</feature>
<feature type="repeat" description="Kelch 3" evidence="3">
    <location>
        <begin position="420"/>
        <end position="466"/>
    </location>
</feature>
<feature type="repeat" description="Kelch 4" evidence="3">
    <location>
        <begin position="468"/>
        <end position="513"/>
    </location>
</feature>
<feature type="repeat" description="Kelch 5" evidence="3">
    <location>
        <begin position="515"/>
        <end position="560"/>
    </location>
</feature>
<feature type="repeat" description="Kelch 6" evidence="3">
    <location>
        <begin position="561"/>
        <end position="607"/>
    </location>
</feature>
<feature type="region of interest" description="Disordered" evidence="5">
    <location>
        <begin position="1"/>
        <end position="56"/>
    </location>
</feature>
<feature type="compositionally biased region" description="Low complexity" evidence="5">
    <location>
        <begin position="14"/>
        <end position="29"/>
    </location>
</feature>
<organism>
    <name type="scientific">Drosophila pseudoobscura pseudoobscura</name>
    <name type="common">Fruit fly</name>
    <dbReference type="NCBI Taxonomy" id="46245"/>
    <lineage>
        <taxon>Eukaryota</taxon>
        <taxon>Metazoa</taxon>
        <taxon>Ecdysozoa</taxon>
        <taxon>Arthropoda</taxon>
        <taxon>Hexapoda</taxon>
        <taxon>Insecta</taxon>
        <taxon>Pterygota</taxon>
        <taxon>Neoptera</taxon>
        <taxon>Endopterygota</taxon>
        <taxon>Diptera</taxon>
        <taxon>Brachycera</taxon>
        <taxon>Muscomorpha</taxon>
        <taxon>Ephydroidea</taxon>
        <taxon>Drosophilidae</taxon>
        <taxon>Drosophila</taxon>
        <taxon>Sophophora</taxon>
    </lineage>
</organism>
<name>KLHDB_DROPS</name>
<sequence length="628" mass="69197">MGDLPGSTGGGSGPAAAGNASGNASSAGNTGLGVAGTTGVDRPPSPARLSHTSEKHPKVTLTELNMLRRHRELCDVVLNVGGRKIFAHRVILSACSSYFCAMFTGELEESRQTEVTIRDIDENAMELLIDFCYTAHIIVEESNVQTLLPAACLLQLVEIQDICCEFLKRQLDPTNCLGIRAFADTHSCRELLRIADKFTQHNFQEVMESEEFLLLPVGQLVDIICSDELNVRSEEQVFNAVMSWLKYNVAERRQHLAQVLQHVRLPLLSPKFLVGTVGSDLLVRSDEACRDLVDEAKNYLLLPQERPLMQGPRTRPRKPTRRGEVLFAVGGWCSGDAIASVERFDPQTNDWKMVAPMSKRRCGVGVAVLNDLLYAVGGHDGQSYLNSIERYDPQTNQWSCDVAPTTSCRTSVGVAVLDGFLYAVGGQDGVQCLNHVERYDPKENKWSKVAPMTTRRLGVAVAVLGGFLYAIGGSDGQCPLNTVERYDPRQNKWVAVSPMSTRRKHLGCAVFNNYIYAVGGRDDCMELSSAERYNPLTNTWSPIVAMTSRRSGVGLAVVNGQLYAVGGFDGSAYLKTIEVYDPETNQWRLCGCMNYRRLGGGVGVMRAPQTENYMWCENSLKQHNNPPS</sequence>
<reference evidence="6" key="1">
    <citation type="journal article" date="2005" name="Genome Res.">
        <title>Comparative genome sequencing of Drosophila pseudoobscura: chromosomal, gene, and cis-element evolution.</title>
        <authorList>
            <person name="Richards S."/>
            <person name="Liu Y."/>
            <person name="Bettencourt B.R."/>
            <person name="Hradecky P."/>
            <person name="Letovsky S."/>
            <person name="Nielsen R."/>
            <person name="Thornton K."/>
            <person name="Hubisz M.J."/>
            <person name="Chen R."/>
            <person name="Meisel R.P."/>
            <person name="Couronne O."/>
            <person name="Hua S."/>
            <person name="Smith M.A."/>
            <person name="Zhang P."/>
            <person name="Liu J."/>
            <person name="Bussemaker H.J."/>
            <person name="van Batenburg M.F."/>
            <person name="Howells S.L."/>
            <person name="Scherer S.E."/>
            <person name="Sodergren E."/>
            <person name="Matthews B.B."/>
            <person name="Crosby M.A."/>
            <person name="Schroeder A.J."/>
            <person name="Ortiz-Barrientos D."/>
            <person name="Rives C.M."/>
            <person name="Metzker M.L."/>
            <person name="Muzny D.M."/>
            <person name="Scott G."/>
            <person name="Steffen D."/>
            <person name="Wheeler D.A."/>
            <person name="Worley K.C."/>
            <person name="Havlak P."/>
            <person name="Durbin K.J."/>
            <person name="Egan A."/>
            <person name="Gill R."/>
            <person name="Hume J."/>
            <person name="Morgan M.B."/>
            <person name="Miner G."/>
            <person name="Hamilton C."/>
            <person name="Huang Y."/>
            <person name="Waldron L."/>
            <person name="Verduzco D."/>
            <person name="Clerc-Blankenburg K.P."/>
            <person name="Dubchak I."/>
            <person name="Noor M.A.F."/>
            <person name="Anderson W."/>
            <person name="White K.P."/>
            <person name="Clark A.G."/>
            <person name="Schaeffer S.W."/>
            <person name="Gelbart W.M."/>
            <person name="Weinstock G.M."/>
            <person name="Gibbs R.A."/>
        </authorList>
    </citation>
    <scope>NUCLEOTIDE SEQUENCE [LARGE SCALE GENOMIC DNA]</scope>
    <source>
        <strain>MV2-25 / Tucson 14011-0121.94</strain>
    </source>
</reference>
<accession>Q2M0J9</accession>
<dbReference type="EMBL" id="CH379069">
    <property type="protein sequence ID" value="EAL30933.2"/>
    <property type="molecule type" value="Genomic_DNA"/>
</dbReference>
<dbReference type="RefSeq" id="XP_015042832.1">
    <property type="nucleotide sequence ID" value="XM_015187346.1"/>
</dbReference>
<dbReference type="RefSeq" id="XP_015042833.1">
    <property type="nucleotide sequence ID" value="XM_015187347.1"/>
</dbReference>
<dbReference type="SMR" id="Q2M0J9"/>
<dbReference type="FunCoup" id="Q2M0J9">
    <property type="interactions" value="1900"/>
</dbReference>
<dbReference type="STRING" id="46245.Q2M0J9"/>
<dbReference type="EnsemblMetazoa" id="FBtr0366069">
    <property type="protein sequence ID" value="FBpp0329308"/>
    <property type="gene ID" value="FBgn0079450"/>
</dbReference>
<dbReference type="EnsemblMetazoa" id="FBtr0378882">
    <property type="protein sequence ID" value="FBpp0339605"/>
    <property type="gene ID" value="FBgn0079450"/>
</dbReference>
<dbReference type="GeneID" id="4813272"/>
<dbReference type="KEGG" id="dpo:4813272"/>
<dbReference type="CTD" id="53556"/>
<dbReference type="eggNOG" id="KOG4441">
    <property type="taxonomic scope" value="Eukaryota"/>
</dbReference>
<dbReference type="HOGENOM" id="CLU_004253_14_2_1"/>
<dbReference type="InParanoid" id="Q2M0J9"/>
<dbReference type="OMA" id="CAVFNNL"/>
<dbReference type="UniPathway" id="UPA00143"/>
<dbReference type="Proteomes" id="UP000001819">
    <property type="component" value="Chromosome X"/>
</dbReference>
<dbReference type="Bgee" id="FBgn0079450">
    <property type="expression patterns" value="Expressed in female reproductive system and 2 other cell types or tissues"/>
</dbReference>
<dbReference type="ExpressionAtlas" id="Q2M0J9">
    <property type="expression patterns" value="baseline"/>
</dbReference>
<dbReference type="GO" id="GO:0003779">
    <property type="term" value="F:actin binding"/>
    <property type="evidence" value="ECO:0007669"/>
    <property type="project" value="UniProtKB-KW"/>
</dbReference>
<dbReference type="GO" id="GO:0045886">
    <property type="term" value="P:negative regulation of synaptic assembly at neuromuscular junction"/>
    <property type="evidence" value="ECO:0000250"/>
    <property type="project" value="UniProtKB"/>
</dbReference>
<dbReference type="GO" id="GO:0016567">
    <property type="term" value="P:protein ubiquitination"/>
    <property type="evidence" value="ECO:0007669"/>
    <property type="project" value="UniProtKB-UniPathway"/>
</dbReference>
<dbReference type="CDD" id="cd18459">
    <property type="entry name" value="BACK_KLHL20"/>
    <property type="match status" value="1"/>
</dbReference>
<dbReference type="CDD" id="cd18249">
    <property type="entry name" value="BTB_POZ_KLHL20_KLEIP"/>
    <property type="match status" value="1"/>
</dbReference>
<dbReference type="FunFam" id="1.25.40.420:FF:000001">
    <property type="entry name" value="Kelch-like family member 12"/>
    <property type="match status" value="1"/>
</dbReference>
<dbReference type="FunFam" id="2.120.10.80:FF:000006">
    <property type="entry name" value="Kelch-like family member 20"/>
    <property type="match status" value="1"/>
</dbReference>
<dbReference type="FunFam" id="3.30.710.10:FF:000001">
    <property type="entry name" value="Kelch-like family member 20"/>
    <property type="match status" value="1"/>
</dbReference>
<dbReference type="Gene3D" id="1.25.40.420">
    <property type="match status" value="1"/>
</dbReference>
<dbReference type="Gene3D" id="2.120.10.80">
    <property type="entry name" value="Kelch-type beta propeller"/>
    <property type="match status" value="1"/>
</dbReference>
<dbReference type="Gene3D" id="3.30.710.10">
    <property type="entry name" value="Potassium Channel Kv1.1, Chain A"/>
    <property type="match status" value="1"/>
</dbReference>
<dbReference type="InterPro" id="IPR011705">
    <property type="entry name" value="BACK"/>
</dbReference>
<dbReference type="InterPro" id="IPR017096">
    <property type="entry name" value="BTB-kelch_protein"/>
</dbReference>
<dbReference type="InterPro" id="IPR000210">
    <property type="entry name" value="BTB/POZ_dom"/>
</dbReference>
<dbReference type="InterPro" id="IPR011043">
    <property type="entry name" value="Gal_Oxase/kelch_b-propeller"/>
</dbReference>
<dbReference type="InterPro" id="IPR015915">
    <property type="entry name" value="Kelch-typ_b-propeller"/>
</dbReference>
<dbReference type="InterPro" id="IPR006652">
    <property type="entry name" value="Kelch_1"/>
</dbReference>
<dbReference type="InterPro" id="IPR011333">
    <property type="entry name" value="SKP1/BTB/POZ_sf"/>
</dbReference>
<dbReference type="PANTHER" id="PTHR24412">
    <property type="entry name" value="KELCH PROTEIN"/>
    <property type="match status" value="1"/>
</dbReference>
<dbReference type="PANTHER" id="PTHR24412:SF451">
    <property type="entry name" value="KELCH-LIKE PROTEIN 20"/>
    <property type="match status" value="1"/>
</dbReference>
<dbReference type="Pfam" id="PF07707">
    <property type="entry name" value="BACK"/>
    <property type="match status" value="1"/>
</dbReference>
<dbReference type="Pfam" id="PF00651">
    <property type="entry name" value="BTB"/>
    <property type="match status" value="1"/>
</dbReference>
<dbReference type="Pfam" id="PF01344">
    <property type="entry name" value="Kelch_1"/>
    <property type="match status" value="6"/>
</dbReference>
<dbReference type="PIRSF" id="PIRSF037037">
    <property type="entry name" value="Kelch-like_protein_gigaxonin"/>
    <property type="match status" value="1"/>
</dbReference>
<dbReference type="SMART" id="SM00875">
    <property type="entry name" value="BACK"/>
    <property type="match status" value="1"/>
</dbReference>
<dbReference type="SMART" id="SM00225">
    <property type="entry name" value="BTB"/>
    <property type="match status" value="1"/>
</dbReference>
<dbReference type="SMART" id="SM00612">
    <property type="entry name" value="Kelch"/>
    <property type="match status" value="6"/>
</dbReference>
<dbReference type="SUPFAM" id="SSF50965">
    <property type="entry name" value="Galactose oxidase, central domain"/>
    <property type="match status" value="1"/>
</dbReference>
<dbReference type="SUPFAM" id="SSF117281">
    <property type="entry name" value="Kelch motif"/>
    <property type="match status" value="1"/>
</dbReference>
<dbReference type="SUPFAM" id="SSF54695">
    <property type="entry name" value="POZ domain"/>
    <property type="match status" value="1"/>
</dbReference>
<dbReference type="PROSITE" id="PS50097">
    <property type="entry name" value="BTB"/>
    <property type="match status" value="1"/>
</dbReference>
<gene>
    <name evidence="1" type="primary">dbo</name>
    <name type="ORF">GA19454</name>
</gene>